<organism>
    <name type="scientific">Shewanella baltica (strain OS195)</name>
    <dbReference type="NCBI Taxonomy" id="399599"/>
    <lineage>
        <taxon>Bacteria</taxon>
        <taxon>Pseudomonadati</taxon>
        <taxon>Pseudomonadota</taxon>
        <taxon>Gammaproteobacteria</taxon>
        <taxon>Alteromonadales</taxon>
        <taxon>Shewanellaceae</taxon>
        <taxon>Shewanella</taxon>
    </lineage>
</organism>
<dbReference type="EC" id="4.2.1.33" evidence="1"/>
<dbReference type="EMBL" id="CP000891">
    <property type="protein sequence ID" value="ABX47581.1"/>
    <property type="molecule type" value="Genomic_DNA"/>
</dbReference>
<dbReference type="RefSeq" id="WP_006086690.1">
    <property type="nucleotide sequence ID" value="NC_009997.1"/>
</dbReference>
<dbReference type="SMR" id="A9KY16"/>
<dbReference type="GeneID" id="11770739"/>
<dbReference type="KEGG" id="sbn:Sbal195_0400"/>
<dbReference type="HOGENOM" id="CLU_081378_0_3_6"/>
<dbReference type="UniPathway" id="UPA00048">
    <property type="reaction ID" value="UER00071"/>
</dbReference>
<dbReference type="Proteomes" id="UP000000770">
    <property type="component" value="Chromosome"/>
</dbReference>
<dbReference type="GO" id="GO:0009316">
    <property type="term" value="C:3-isopropylmalate dehydratase complex"/>
    <property type="evidence" value="ECO:0007669"/>
    <property type="project" value="InterPro"/>
</dbReference>
<dbReference type="GO" id="GO:0003861">
    <property type="term" value="F:3-isopropylmalate dehydratase activity"/>
    <property type="evidence" value="ECO:0007669"/>
    <property type="project" value="UniProtKB-UniRule"/>
</dbReference>
<dbReference type="GO" id="GO:0009098">
    <property type="term" value="P:L-leucine biosynthetic process"/>
    <property type="evidence" value="ECO:0007669"/>
    <property type="project" value="UniProtKB-UniRule"/>
</dbReference>
<dbReference type="CDD" id="cd01577">
    <property type="entry name" value="IPMI_Swivel"/>
    <property type="match status" value="1"/>
</dbReference>
<dbReference type="FunFam" id="3.20.19.10:FF:000003">
    <property type="entry name" value="3-isopropylmalate dehydratase small subunit"/>
    <property type="match status" value="1"/>
</dbReference>
<dbReference type="Gene3D" id="3.20.19.10">
    <property type="entry name" value="Aconitase, domain 4"/>
    <property type="match status" value="1"/>
</dbReference>
<dbReference type="HAMAP" id="MF_01031">
    <property type="entry name" value="LeuD_type1"/>
    <property type="match status" value="1"/>
</dbReference>
<dbReference type="InterPro" id="IPR004431">
    <property type="entry name" value="3-IsopropMal_deHydase_ssu"/>
</dbReference>
<dbReference type="InterPro" id="IPR015928">
    <property type="entry name" value="Aconitase/3IPM_dehydase_swvl"/>
</dbReference>
<dbReference type="InterPro" id="IPR000573">
    <property type="entry name" value="AconitaseA/IPMdHydase_ssu_swvl"/>
</dbReference>
<dbReference type="InterPro" id="IPR033940">
    <property type="entry name" value="IPMI_Swivel"/>
</dbReference>
<dbReference type="InterPro" id="IPR050075">
    <property type="entry name" value="LeuD"/>
</dbReference>
<dbReference type="NCBIfam" id="TIGR00171">
    <property type="entry name" value="leuD"/>
    <property type="match status" value="1"/>
</dbReference>
<dbReference type="NCBIfam" id="NF002458">
    <property type="entry name" value="PRK01641.1"/>
    <property type="match status" value="1"/>
</dbReference>
<dbReference type="PANTHER" id="PTHR43345:SF5">
    <property type="entry name" value="3-ISOPROPYLMALATE DEHYDRATASE SMALL SUBUNIT"/>
    <property type="match status" value="1"/>
</dbReference>
<dbReference type="PANTHER" id="PTHR43345">
    <property type="entry name" value="3-ISOPROPYLMALATE DEHYDRATASE SMALL SUBUNIT 2-RELATED-RELATED"/>
    <property type="match status" value="1"/>
</dbReference>
<dbReference type="Pfam" id="PF00694">
    <property type="entry name" value="Aconitase_C"/>
    <property type="match status" value="1"/>
</dbReference>
<dbReference type="SUPFAM" id="SSF52016">
    <property type="entry name" value="LeuD/IlvD-like"/>
    <property type="match status" value="1"/>
</dbReference>
<name>LEUD_SHEB9</name>
<gene>
    <name evidence="1" type="primary">leuD</name>
    <name type="ordered locus">Sbal195_0400</name>
</gene>
<proteinExistence type="inferred from homology"/>
<sequence length="201" mass="22034">MQPFTTHTGLAVMIDSTNIDTDQIIPKQFLSKVTRDGFGVHLFHDWRYLDDAGDQPNPEFSLNQSRYKGASILLAQENFGCGSSREHAPWALVDFGLRAIIAPSFADIFYGNSINNGLLPVALTHAQVRQLMDEVAAEAGAQITVDLTSCKVISPSGAEFSFTLAESARHKLLNGLDAIGLTLSHAAQISQYETQIQGWRR</sequence>
<accession>A9KY16</accession>
<keyword id="KW-0028">Amino-acid biosynthesis</keyword>
<keyword id="KW-0100">Branched-chain amino acid biosynthesis</keyword>
<keyword id="KW-0432">Leucine biosynthesis</keyword>
<keyword id="KW-0456">Lyase</keyword>
<evidence type="ECO:0000255" key="1">
    <source>
        <dbReference type="HAMAP-Rule" id="MF_01031"/>
    </source>
</evidence>
<protein>
    <recommendedName>
        <fullName evidence="1">3-isopropylmalate dehydratase small subunit</fullName>
        <ecNumber evidence="1">4.2.1.33</ecNumber>
    </recommendedName>
    <alternativeName>
        <fullName evidence="1">Alpha-IPM isomerase</fullName>
        <shortName evidence="1">IPMI</shortName>
    </alternativeName>
    <alternativeName>
        <fullName evidence="1">Isopropylmalate isomerase</fullName>
    </alternativeName>
</protein>
<reference key="1">
    <citation type="submission" date="2007-11" db="EMBL/GenBank/DDBJ databases">
        <title>Complete sequence of chromosome of Shewanella baltica OS195.</title>
        <authorList>
            <consortium name="US DOE Joint Genome Institute"/>
            <person name="Copeland A."/>
            <person name="Lucas S."/>
            <person name="Lapidus A."/>
            <person name="Barry K."/>
            <person name="Glavina del Rio T."/>
            <person name="Dalin E."/>
            <person name="Tice H."/>
            <person name="Pitluck S."/>
            <person name="Chain P."/>
            <person name="Malfatti S."/>
            <person name="Shin M."/>
            <person name="Vergez L."/>
            <person name="Schmutz J."/>
            <person name="Larimer F."/>
            <person name="Land M."/>
            <person name="Hauser L."/>
            <person name="Kyrpides N."/>
            <person name="Kim E."/>
            <person name="Brettar I."/>
            <person name="Rodrigues J."/>
            <person name="Konstantinidis K."/>
            <person name="Klappenbach J."/>
            <person name="Hofle M."/>
            <person name="Tiedje J."/>
            <person name="Richardson P."/>
        </authorList>
    </citation>
    <scope>NUCLEOTIDE SEQUENCE [LARGE SCALE GENOMIC DNA]</scope>
    <source>
        <strain>OS195</strain>
    </source>
</reference>
<comment type="function">
    <text evidence="1">Catalyzes the isomerization between 2-isopropylmalate and 3-isopropylmalate, via the formation of 2-isopropylmaleate.</text>
</comment>
<comment type="catalytic activity">
    <reaction evidence="1">
        <text>(2R,3S)-3-isopropylmalate = (2S)-2-isopropylmalate</text>
        <dbReference type="Rhea" id="RHEA:32287"/>
        <dbReference type="ChEBI" id="CHEBI:1178"/>
        <dbReference type="ChEBI" id="CHEBI:35121"/>
        <dbReference type="EC" id="4.2.1.33"/>
    </reaction>
</comment>
<comment type="pathway">
    <text evidence="1">Amino-acid biosynthesis; L-leucine biosynthesis; L-leucine from 3-methyl-2-oxobutanoate: step 2/4.</text>
</comment>
<comment type="subunit">
    <text evidence="1">Heterodimer of LeuC and LeuD.</text>
</comment>
<comment type="similarity">
    <text evidence="1">Belongs to the LeuD family. LeuD type 1 subfamily.</text>
</comment>
<feature type="chain" id="PRO_1000084265" description="3-isopropylmalate dehydratase small subunit">
    <location>
        <begin position="1"/>
        <end position="201"/>
    </location>
</feature>